<comment type="function">
    <text>Fatty acid synthetase catalyzes the formation of long-chain fatty acids from acetyl-CoA, malonyl-CoA and NADPH. The alpha subunit contains domains for: acyl carrier protein, 3-oxoacyl-[acyl-carrier-protein] reductase, and 3-oxoacyl-[acyl-carrier-protein] synthase.</text>
</comment>
<comment type="catalytic activity">
    <reaction>
        <text>acetyl-CoA + n malonyl-CoA + 2n NADPH + 4n H(+) = a long-chain-acyl-CoA + n CoA + n CO2 + 2n NADP(+).</text>
        <dbReference type="EC" id="2.3.1.86"/>
    </reaction>
</comment>
<comment type="catalytic activity">
    <reaction>
        <text>a fatty acyl-[ACP] + malonyl-[ACP] + H(+) = a 3-oxoacyl-[ACP] + holo-[ACP] + CO2</text>
        <dbReference type="Rhea" id="RHEA:22836"/>
        <dbReference type="Rhea" id="RHEA-COMP:9623"/>
        <dbReference type="Rhea" id="RHEA-COMP:9685"/>
        <dbReference type="Rhea" id="RHEA-COMP:9916"/>
        <dbReference type="Rhea" id="RHEA-COMP:14125"/>
        <dbReference type="ChEBI" id="CHEBI:15378"/>
        <dbReference type="ChEBI" id="CHEBI:16526"/>
        <dbReference type="ChEBI" id="CHEBI:64479"/>
        <dbReference type="ChEBI" id="CHEBI:78449"/>
        <dbReference type="ChEBI" id="CHEBI:78776"/>
        <dbReference type="ChEBI" id="CHEBI:138651"/>
        <dbReference type="EC" id="2.3.1.41"/>
    </reaction>
</comment>
<comment type="catalytic activity">
    <reaction>
        <text>a (3R)-hydroxyacyl-[ACP] + NADP(+) = a 3-oxoacyl-[ACP] + NADPH + H(+)</text>
        <dbReference type="Rhea" id="RHEA:17397"/>
        <dbReference type="Rhea" id="RHEA-COMP:9916"/>
        <dbReference type="Rhea" id="RHEA-COMP:9945"/>
        <dbReference type="ChEBI" id="CHEBI:15378"/>
        <dbReference type="ChEBI" id="CHEBI:57783"/>
        <dbReference type="ChEBI" id="CHEBI:58349"/>
        <dbReference type="ChEBI" id="CHEBI:78776"/>
        <dbReference type="ChEBI" id="CHEBI:78827"/>
        <dbReference type="EC" id="1.1.1.100"/>
    </reaction>
</comment>
<comment type="subunit">
    <text>[Alpha(6)beta(6)] hexamers of two multifunctional subunits (alpha and beta).</text>
</comment>
<comment type="similarity">
    <text evidence="5">Belongs to the thiolase-like superfamily. Fungal fatty acid synthetase subunit alpha family.</text>
</comment>
<accession>P15368</accession>
<organism>
    <name type="scientific">Penicillium patulum</name>
    <name type="common">Penicillium griseofulvum</name>
    <dbReference type="NCBI Taxonomy" id="5078"/>
    <lineage>
        <taxon>Eukaryota</taxon>
        <taxon>Fungi</taxon>
        <taxon>Dikarya</taxon>
        <taxon>Ascomycota</taxon>
        <taxon>Pezizomycotina</taxon>
        <taxon>Eurotiomycetes</taxon>
        <taxon>Eurotiomycetidae</taxon>
        <taxon>Eurotiales</taxon>
        <taxon>Aspergillaceae</taxon>
        <taxon>Penicillium</taxon>
    </lineage>
</organism>
<keyword id="KW-0275">Fatty acid biosynthesis</keyword>
<keyword id="KW-0276">Fatty acid metabolism</keyword>
<keyword id="KW-0444">Lipid biosynthesis</keyword>
<keyword id="KW-0443">Lipid metabolism</keyword>
<keyword id="KW-0460">Magnesium</keyword>
<keyword id="KW-0479">Metal-binding</keyword>
<keyword id="KW-0511">Multifunctional enzyme</keyword>
<keyword id="KW-0520">NAD</keyword>
<keyword id="KW-0521">NADP</keyword>
<keyword id="KW-0560">Oxidoreductase</keyword>
<keyword id="KW-0596">Phosphopantetheine</keyword>
<keyword id="KW-0597">Phosphoprotein</keyword>
<keyword id="KW-0808">Transferase</keyword>
<sequence>MRPEVEQELAHTLLVELLAYQFASPVRWIETQDVILAEQRTERIVEIGPADTLGGMARRTLASKYEAYDAATSVQRQILCYNKDAKEIYYDVDPVEEEPEATEPAPSATPAAPAAAPAAGAPPPPPSAGPAASVEDIPVTAVDILRTLVAQKLKKSLADVPLSKAIKDLVGGKSTLQNEILGDLGKEFGSTPEKPEDVPLDELGASMQATFNGQLGKQSSSLIARMVSSKMPGGFNITSVRKYLETRWGLGSGRQDGVLLLALTMEPAARLGSEVDAKAYLDDVTNKYAASAGVNLSAPVAGGDSGGAGGGMVMDPAAIDALTKDQRALFKQQLEIIARYLKMDLRGGEKAHVISQETQKALQAQLDLWQAEHGDFYASGIEPSFDQLKARVYDSSWNWARQDALSMYYDIIFGRLQVVDREIVSQCIRIMNRSNPLLLDFMQYHIDNCPTERGETYQLAKELGQQLIENCREVLEVAPVYKDVAVPTGPQTTIDARGNISYKETPRTSARKLEHYVKHMAEGGPISEYSNRTKVQNDLKSVYKLIRKQHRLSKSSQLQFDALYKDVVHALGMNESQIIPQENGHSKKGGRSAAKRNTPTRPGKVETIPFLHLKKKTEHGWDYNKKLTGIYLNVTESAAKDGLSFQGKNVLMTGAGAGSIGAEVLQGLISGGAQVIVTTSRFSREVTEYYQAMYARYGARGSQLVVVPFNQGSKQDVEALVEYIYDTKKGLGWDLDFVVPFAAIPENGREIDSIDSKSELAHRIMLTNLLRLLGSVKTQKQAHGFETRPAQVILPLSPNHGTFGNDGLYSESKLALETLFNRWYSENWGHYLTICGAVIGWTRGTGLMSGNNMVAEGVEKLGVRTFSQQEMAFNLLGLMSPAIVNLCQLDPVFADLNGGLQFIPDLKGLMTKLRTDIMETSDVRQAVMKETAIEHNIVNGEDSGVLYKKVIAEPRANIKFEFPNLPDWEKEVKPLNENLKGMVNLDKVVVVTGFSEVGPWGNSRTRWEMESKGKFSLEGCVEMAWIMGLIKHHNGPLKGQAYSGWVDAKTGEPVDDKDVKPKYEKHILEHTGIRLIEPELFKGYDPKKKQLLQEIVIQEDLEPFEASKETAEEFKREHGDKVEIFEIPESGEYTVRLCKGATMLIPKALQFDRLVAGQVPTGWDASRYGIPDDIISQVDPVTLFVLVCTAEAMLSAGVTDPYEFYKYVHLSEVGNCIGSGIGGTHRLRGMYKDRFLDKPLQKDILQESFINTMSAWVNMLLLSSTGPIKTPVGCCATAVESVDIGYETIVEGKARVCFVGGFDDFQEEGSYEFANMKATSNAEDEFAHGRTPQEMSRPTTTTRAGFMESQGCGMQLIMTAQLALDMGVPIHGIIALTTTATDKIGRSVRSVPAPGQGVLTTARENPGKFPSPLLDIKYRRRQLDLRKKQINEWQEAELLYLQEEAEAMKAQSDETFNEAEYMQERAQHIEREAIRQEKDAQYSLGNNFWKQDSRIAPLRGAMATWGLTVDDIDVASFHGTSTVANDKNESDVICQQMKHLGRSKGNAVMGIFQKYLTGHPKGAAGAWMFNGCLQVLDSGLVPGNRNADNVDKVMEKFDYIVYPSRSIQTDGVKAFSVTSFGFGQKGAQVIGIHPKYLYATLDQAQYEAYKTKVEARQKKAYRYFHNGLINNSIFVAKSKAPYEDEQQSKVFLNPDYRVSVDKKTSELKFSTTAPEAKQSESTRQTLESLAKANATENSKIGVDVEHIDSVNIENETFVERNFTQSEQDYCRKAASPQSSFAGRWSAKEAVFKSLGVSSKGAGAALKDIEIGVDANGAPVVNLHGAAAAAAKQAGVKQVSVSISHSDSQAVAVAVSQF</sequence>
<feature type="chain" id="PRO_0000180285" description="Fatty acid synthase subunit alpha">
    <location>
        <begin position="1"/>
        <end position="1857"/>
    </location>
</feature>
<feature type="domain" description="Carrier" evidence="2">
    <location>
        <begin position="139"/>
        <end position="214"/>
    </location>
</feature>
<feature type="domain" description="Ketosynthase family 3 (KS3)" evidence="3">
    <location>
        <begin position="1092"/>
        <end position="1633"/>
    </location>
</feature>
<feature type="region of interest" description="Disordered" evidence="4">
    <location>
        <begin position="96"/>
        <end position="132"/>
    </location>
</feature>
<feature type="region of interest" description="Disordered" evidence="4">
    <location>
        <begin position="577"/>
        <end position="604"/>
    </location>
</feature>
<feature type="region of interest" description="Beta-ketoacyl reductase">
    <location>
        <begin position="648"/>
        <end position="845"/>
    </location>
</feature>
<feature type="compositionally biased region" description="Low complexity" evidence="4">
    <location>
        <begin position="102"/>
        <end position="119"/>
    </location>
</feature>
<feature type="active site" description="For beta-ketoacyl synthase activity" evidence="3">
    <location>
        <position position="1275"/>
    </location>
</feature>
<feature type="active site" description="For beta-ketoacyl synthase activity" evidence="3">
    <location>
        <position position="1518"/>
    </location>
</feature>
<feature type="active site" description="For beta-ketoacyl synthase activity" evidence="3">
    <location>
        <position position="1559"/>
    </location>
</feature>
<feature type="binding site" evidence="1">
    <location>
        <begin position="1743"/>
        <end position="1745"/>
    </location>
    <ligand>
        <name>acetyl-CoA</name>
        <dbReference type="ChEBI" id="CHEBI:57288"/>
    </ligand>
</feature>
<feature type="binding site" evidence="1">
    <location>
        <position position="1743"/>
    </location>
    <ligand>
        <name>Mg(2+)</name>
        <dbReference type="ChEBI" id="CHEBI:18420"/>
    </ligand>
</feature>
<feature type="binding site" evidence="1">
    <location>
        <position position="1744"/>
    </location>
    <ligand>
        <name>Mg(2+)</name>
        <dbReference type="ChEBI" id="CHEBI:18420"/>
    </ligand>
</feature>
<feature type="binding site" evidence="1">
    <location>
        <position position="1745"/>
    </location>
    <ligand>
        <name>Mg(2+)</name>
        <dbReference type="ChEBI" id="CHEBI:18420"/>
    </ligand>
</feature>
<feature type="binding site" evidence="1">
    <location>
        <position position="1769"/>
    </location>
    <ligand>
        <name>acetyl-CoA</name>
        <dbReference type="ChEBI" id="CHEBI:57288"/>
    </ligand>
</feature>
<feature type="binding site" evidence="1">
    <location>
        <position position="1779"/>
    </location>
    <ligand>
        <name>acetyl-CoA</name>
        <dbReference type="ChEBI" id="CHEBI:57288"/>
    </ligand>
</feature>
<feature type="binding site" evidence="1">
    <location>
        <begin position="1788"/>
        <end position="1798"/>
    </location>
    <ligand>
        <name>acetyl-CoA</name>
        <dbReference type="ChEBI" id="CHEBI:57288"/>
    </ligand>
</feature>
<feature type="binding site" evidence="1">
    <location>
        <begin position="1812"/>
        <end position="1815"/>
    </location>
    <ligand>
        <name>acetyl-CoA</name>
        <dbReference type="ChEBI" id="CHEBI:57288"/>
    </ligand>
</feature>
<feature type="binding site" evidence="1">
    <location>
        <begin position="1842"/>
        <end position="1844"/>
    </location>
    <ligand>
        <name>acetyl-CoA</name>
        <dbReference type="ChEBI" id="CHEBI:57288"/>
    </ligand>
</feature>
<feature type="binding site" evidence="1">
    <location>
        <position position="1843"/>
    </location>
    <ligand>
        <name>Mg(2+)</name>
        <dbReference type="ChEBI" id="CHEBI:18420"/>
    </ligand>
</feature>
<feature type="binding site" evidence="1">
    <location>
        <position position="1844"/>
    </location>
    <ligand>
        <name>Mg(2+)</name>
        <dbReference type="ChEBI" id="CHEBI:18420"/>
    </ligand>
</feature>
<feature type="modified residue" description="O-(pantetheine 4'-phosphoryl)serine" evidence="2">
    <location>
        <position position="174"/>
    </location>
</feature>
<protein>
    <recommendedName>
        <fullName>Fatty acid synthase subunit alpha</fullName>
        <ecNumber>2.3.1.86</ecNumber>
    </recommendedName>
    <domain>
        <recommendedName>
            <fullName>Acyl carrier</fullName>
        </recommendedName>
    </domain>
    <domain>
        <recommendedName>
            <fullName>3-oxoacyl-[acyl-carrier-protein] reductase</fullName>
            <ecNumber>1.1.1.100</ecNumber>
        </recommendedName>
        <alternativeName>
            <fullName>Beta-ketoacyl reductase</fullName>
        </alternativeName>
    </domain>
    <domain>
        <recommendedName>
            <fullName>3-oxoacyl-[acyl-carrier-protein] synthase</fullName>
            <ecNumber>2.3.1.41</ecNumber>
        </recommendedName>
        <alternativeName>
            <fullName>Beta-ketoacyl synthase</fullName>
        </alternativeName>
    </domain>
</protein>
<name>FAS2_PENPA</name>
<reference key="1">
    <citation type="journal article" date="1988" name="Eur. J. Biochem.">
        <title>Isolation and sequence analysis of the fatty acid synthetase FAS2 gene from Penicillium patulum.</title>
        <authorList>
            <person name="Wiesner P."/>
            <person name="Beck J."/>
            <person name="Beck K.-F."/>
            <person name="Ripka S."/>
            <person name="Mueller G."/>
            <person name="Luecke S."/>
            <person name="Schweizer E."/>
        </authorList>
    </citation>
    <scope>NUCLEOTIDE SEQUENCE [GENOMIC DNA]</scope>
</reference>
<gene>
    <name type="primary">FAS2</name>
</gene>
<evidence type="ECO:0000250" key="1"/>
<evidence type="ECO:0000255" key="2">
    <source>
        <dbReference type="PROSITE-ProRule" id="PRU00258"/>
    </source>
</evidence>
<evidence type="ECO:0000255" key="3">
    <source>
        <dbReference type="PROSITE-ProRule" id="PRU01348"/>
    </source>
</evidence>
<evidence type="ECO:0000256" key="4">
    <source>
        <dbReference type="SAM" id="MobiDB-lite"/>
    </source>
</evidence>
<evidence type="ECO:0000305" key="5"/>
<proteinExistence type="inferred from homology"/>
<dbReference type="EC" id="2.3.1.86"/>
<dbReference type="EC" id="1.1.1.100"/>
<dbReference type="EC" id="2.3.1.41"/>
<dbReference type="EMBL" id="M37461">
    <property type="protein sequence ID" value="AAA33695.1"/>
    <property type="molecule type" value="Genomic_DNA"/>
</dbReference>
<dbReference type="PIR" id="S01787">
    <property type="entry name" value="S01787"/>
</dbReference>
<dbReference type="SMR" id="P15368"/>
<dbReference type="GO" id="GO:0005835">
    <property type="term" value="C:fatty acid synthase complex"/>
    <property type="evidence" value="ECO:0007669"/>
    <property type="project" value="InterPro"/>
</dbReference>
<dbReference type="GO" id="GO:0004316">
    <property type="term" value="F:3-oxoacyl-[acyl-carrier-protein] reductase (NADPH) activity"/>
    <property type="evidence" value="ECO:0007669"/>
    <property type="project" value="UniProtKB-EC"/>
</dbReference>
<dbReference type="GO" id="GO:0004315">
    <property type="term" value="F:3-oxoacyl-[acyl-carrier-protein] synthase activity"/>
    <property type="evidence" value="ECO:0007669"/>
    <property type="project" value="UniProtKB-EC"/>
</dbReference>
<dbReference type="GO" id="GO:0004312">
    <property type="term" value="F:fatty acid synthase activity"/>
    <property type="evidence" value="ECO:0007669"/>
    <property type="project" value="InterPro"/>
</dbReference>
<dbReference type="GO" id="GO:0004321">
    <property type="term" value="F:fatty-acyl-CoA synthase activity"/>
    <property type="evidence" value="ECO:0007669"/>
    <property type="project" value="UniProtKB-EC"/>
</dbReference>
<dbReference type="GO" id="GO:0008897">
    <property type="term" value="F:holo-[acyl-carrier-protein] synthase activity"/>
    <property type="evidence" value="ECO:0007669"/>
    <property type="project" value="InterPro"/>
</dbReference>
<dbReference type="GO" id="GO:0000287">
    <property type="term" value="F:magnesium ion binding"/>
    <property type="evidence" value="ECO:0007669"/>
    <property type="project" value="InterPro"/>
</dbReference>
<dbReference type="GO" id="GO:0042759">
    <property type="term" value="P:long-chain fatty acid biosynthetic process"/>
    <property type="evidence" value="ECO:0007669"/>
    <property type="project" value="InterPro"/>
</dbReference>
<dbReference type="CDD" id="cd00828">
    <property type="entry name" value="elong_cond_enzymes"/>
    <property type="match status" value="1"/>
</dbReference>
<dbReference type="CDD" id="cd08950">
    <property type="entry name" value="KR_fFAS_SDR_c_like"/>
    <property type="match status" value="1"/>
</dbReference>
<dbReference type="FunFam" id="3.90.470.20:FF:000005">
    <property type="entry name" value="Fatty acid synthase alpha subunit FasA"/>
    <property type="match status" value="1"/>
</dbReference>
<dbReference type="FunFam" id="3.30.70.2490:FF:000001">
    <property type="entry name" value="Fatty acid synthase subunit alpha"/>
    <property type="match status" value="1"/>
</dbReference>
<dbReference type="FunFam" id="3.90.25.70:FF:000001">
    <property type="entry name" value="Fatty acid synthase subunit alpha"/>
    <property type="match status" value="1"/>
</dbReference>
<dbReference type="Gene3D" id="3.30.70.2490">
    <property type="match status" value="1"/>
</dbReference>
<dbReference type="Gene3D" id="3.40.47.10">
    <property type="match status" value="1"/>
</dbReference>
<dbReference type="Gene3D" id="3.90.25.70">
    <property type="match status" value="1"/>
</dbReference>
<dbReference type="Gene3D" id="6.10.140.1390">
    <property type="match status" value="1"/>
</dbReference>
<dbReference type="Gene3D" id="6.10.140.1410">
    <property type="match status" value="1"/>
</dbReference>
<dbReference type="Gene3D" id="6.10.250.1930">
    <property type="match status" value="1"/>
</dbReference>
<dbReference type="Gene3D" id="6.10.250.1940">
    <property type="match status" value="1"/>
</dbReference>
<dbReference type="Gene3D" id="3.90.470.20">
    <property type="entry name" value="4'-phosphopantetheinyl transferase domain"/>
    <property type="match status" value="1"/>
</dbReference>
<dbReference type="Gene3D" id="3.40.50.720">
    <property type="entry name" value="NAD(P)-binding Rossmann-like Domain"/>
    <property type="match status" value="1"/>
</dbReference>
<dbReference type="HAMAP" id="MF_00101">
    <property type="entry name" value="AcpS"/>
    <property type="match status" value="1"/>
</dbReference>
<dbReference type="InterPro" id="IPR008278">
    <property type="entry name" value="4-PPantetheinyl_Trfase_dom"/>
</dbReference>
<dbReference type="InterPro" id="IPR037143">
    <property type="entry name" value="4-PPantetheinyl_Trfase_dom_sf"/>
</dbReference>
<dbReference type="InterPro" id="IPR002582">
    <property type="entry name" value="ACPS"/>
</dbReference>
<dbReference type="InterPro" id="IPR016035">
    <property type="entry name" value="Acyl_Trfase/lysoPLipase"/>
</dbReference>
<dbReference type="InterPro" id="IPR040899">
    <property type="entry name" value="Fas_alpha_ACP"/>
</dbReference>
<dbReference type="InterPro" id="IPR047224">
    <property type="entry name" value="FAS_alpha_su_C"/>
</dbReference>
<dbReference type="InterPro" id="IPR026025">
    <property type="entry name" value="FAS_alpha_yeast"/>
</dbReference>
<dbReference type="InterPro" id="IPR041550">
    <property type="entry name" value="FASI_helical"/>
</dbReference>
<dbReference type="InterPro" id="IPR050830">
    <property type="entry name" value="Fungal_FAS"/>
</dbReference>
<dbReference type="InterPro" id="IPR018201">
    <property type="entry name" value="Ketoacyl_synth_AS"/>
</dbReference>
<dbReference type="InterPro" id="IPR014031">
    <property type="entry name" value="Ketoacyl_synth_C"/>
</dbReference>
<dbReference type="InterPro" id="IPR014030">
    <property type="entry name" value="Ketoacyl_synth_N"/>
</dbReference>
<dbReference type="InterPro" id="IPR036291">
    <property type="entry name" value="NAD(P)-bd_dom_sf"/>
</dbReference>
<dbReference type="InterPro" id="IPR020841">
    <property type="entry name" value="PKS_Beta-ketoAc_synthase_dom"/>
</dbReference>
<dbReference type="InterPro" id="IPR009081">
    <property type="entry name" value="PP-bd_ACP"/>
</dbReference>
<dbReference type="InterPro" id="IPR004568">
    <property type="entry name" value="Ppantetheine-prot_Trfase_dom"/>
</dbReference>
<dbReference type="InterPro" id="IPR016039">
    <property type="entry name" value="Thiolase-like"/>
</dbReference>
<dbReference type="NCBIfam" id="TIGR00556">
    <property type="entry name" value="pantethn_trn"/>
    <property type="match status" value="1"/>
</dbReference>
<dbReference type="PANTHER" id="PTHR10982:SF21">
    <property type="entry name" value="FATTY ACID SYNTHASE SUBUNIT BETA"/>
    <property type="match status" value="1"/>
</dbReference>
<dbReference type="PANTHER" id="PTHR10982">
    <property type="entry name" value="MALONYL COA-ACYL CARRIER PROTEIN TRANSACYLASE"/>
    <property type="match status" value="1"/>
</dbReference>
<dbReference type="Pfam" id="PF01648">
    <property type="entry name" value="ACPS"/>
    <property type="match status" value="1"/>
</dbReference>
<dbReference type="Pfam" id="PF18325">
    <property type="entry name" value="Fas_alpha_ACP"/>
    <property type="match status" value="1"/>
</dbReference>
<dbReference type="Pfam" id="PF18314">
    <property type="entry name" value="FAS_I_H"/>
    <property type="match status" value="1"/>
</dbReference>
<dbReference type="Pfam" id="PF00109">
    <property type="entry name" value="ketoacyl-synt"/>
    <property type="match status" value="1"/>
</dbReference>
<dbReference type="Pfam" id="PF02801">
    <property type="entry name" value="Ketoacyl-synt_C"/>
    <property type="match status" value="1"/>
</dbReference>
<dbReference type="PIRSF" id="PIRSF000454">
    <property type="entry name" value="FAS_yeast_alpha"/>
    <property type="match status" value="1"/>
</dbReference>
<dbReference type="SUPFAM" id="SSF56214">
    <property type="entry name" value="4'-phosphopantetheinyl transferase"/>
    <property type="match status" value="1"/>
</dbReference>
<dbReference type="SUPFAM" id="SSF52151">
    <property type="entry name" value="FabD/lysophospholipase-like"/>
    <property type="match status" value="1"/>
</dbReference>
<dbReference type="SUPFAM" id="SSF51735">
    <property type="entry name" value="NAD(P)-binding Rossmann-fold domains"/>
    <property type="match status" value="1"/>
</dbReference>
<dbReference type="SUPFAM" id="SSF53901">
    <property type="entry name" value="Thiolase-like"/>
    <property type="match status" value="2"/>
</dbReference>
<dbReference type="PROSITE" id="PS50075">
    <property type="entry name" value="CARRIER"/>
    <property type="match status" value="1"/>
</dbReference>
<dbReference type="PROSITE" id="PS00606">
    <property type="entry name" value="KS3_1"/>
    <property type="match status" value="1"/>
</dbReference>
<dbReference type="PROSITE" id="PS52004">
    <property type="entry name" value="KS3_2"/>
    <property type="match status" value="1"/>
</dbReference>
<dbReference type="PROSITE" id="PS00012">
    <property type="entry name" value="PHOSPHOPANTETHEINE"/>
    <property type="match status" value="1"/>
</dbReference>